<feature type="chain" id="PRO_0000327568" description="General transcription factor IIH subunit 4">
    <location>
        <begin position="1"/>
        <end position="483"/>
    </location>
</feature>
<feature type="region of interest" description="Disordered" evidence="3">
    <location>
        <begin position="93"/>
        <end position="117"/>
    </location>
</feature>
<feature type="compositionally biased region" description="Low complexity" evidence="3">
    <location>
        <begin position="94"/>
        <end position="116"/>
    </location>
</feature>
<keyword id="KW-0227">DNA damage</keyword>
<keyword id="KW-0234">DNA repair</keyword>
<keyword id="KW-0539">Nucleus</keyword>
<keyword id="KW-1185">Reference proteome</keyword>
<keyword id="KW-0804">Transcription</keyword>
<keyword id="KW-0805">Transcription regulation</keyword>
<name>TF2H4_DICDI</name>
<reference key="1">
    <citation type="journal article" date="2005" name="Nature">
        <title>The genome of the social amoeba Dictyostelium discoideum.</title>
        <authorList>
            <person name="Eichinger L."/>
            <person name="Pachebat J.A."/>
            <person name="Gloeckner G."/>
            <person name="Rajandream M.A."/>
            <person name="Sucgang R."/>
            <person name="Berriman M."/>
            <person name="Song J."/>
            <person name="Olsen R."/>
            <person name="Szafranski K."/>
            <person name="Xu Q."/>
            <person name="Tunggal B."/>
            <person name="Kummerfeld S."/>
            <person name="Madera M."/>
            <person name="Konfortov B.A."/>
            <person name="Rivero F."/>
            <person name="Bankier A.T."/>
            <person name="Lehmann R."/>
            <person name="Hamlin N."/>
            <person name="Davies R."/>
            <person name="Gaudet P."/>
            <person name="Fey P."/>
            <person name="Pilcher K."/>
            <person name="Chen G."/>
            <person name="Saunders D."/>
            <person name="Sodergren E.J."/>
            <person name="Davis P."/>
            <person name="Kerhornou A."/>
            <person name="Nie X."/>
            <person name="Hall N."/>
            <person name="Anjard C."/>
            <person name="Hemphill L."/>
            <person name="Bason N."/>
            <person name="Farbrother P."/>
            <person name="Desany B."/>
            <person name="Just E."/>
            <person name="Morio T."/>
            <person name="Rost R."/>
            <person name="Churcher C.M."/>
            <person name="Cooper J."/>
            <person name="Haydock S."/>
            <person name="van Driessche N."/>
            <person name="Cronin A."/>
            <person name="Goodhead I."/>
            <person name="Muzny D.M."/>
            <person name="Mourier T."/>
            <person name="Pain A."/>
            <person name="Lu M."/>
            <person name="Harper D."/>
            <person name="Lindsay R."/>
            <person name="Hauser H."/>
            <person name="James K.D."/>
            <person name="Quiles M."/>
            <person name="Madan Babu M."/>
            <person name="Saito T."/>
            <person name="Buchrieser C."/>
            <person name="Wardroper A."/>
            <person name="Felder M."/>
            <person name="Thangavelu M."/>
            <person name="Johnson D."/>
            <person name="Knights A."/>
            <person name="Loulseged H."/>
            <person name="Mungall K.L."/>
            <person name="Oliver K."/>
            <person name="Price C."/>
            <person name="Quail M.A."/>
            <person name="Urushihara H."/>
            <person name="Hernandez J."/>
            <person name="Rabbinowitsch E."/>
            <person name="Steffen D."/>
            <person name="Sanders M."/>
            <person name="Ma J."/>
            <person name="Kohara Y."/>
            <person name="Sharp S."/>
            <person name="Simmonds M.N."/>
            <person name="Spiegler S."/>
            <person name="Tivey A."/>
            <person name="Sugano S."/>
            <person name="White B."/>
            <person name="Walker D."/>
            <person name="Woodward J.R."/>
            <person name="Winckler T."/>
            <person name="Tanaka Y."/>
            <person name="Shaulsky G."/>
            <person name="Schleicher M."/>
            <person name="Weinstock G.M."/>
            <person name="Rosenthal A."/>
            <person name="Cox E.C."/>
            <person name="Chisholm R.L."/>
            <person name="Gibbs R.A."/>
            <person name="Loomis W.F."/>
            <person name="Platzer M."/>
            <person name="Kay R.R."/>
            <person name="Williams J.G."/>
            <person name="Dear P.H."/>
            <person name="Noegel A.A."/>
            <person name="Barrell B.G."/>
            <person name="Kuspa A."/>
        </authorList>
    </citation>
    <scope>NUCLEOTIDE SEQUENCE [LARGE SCALE GENOMIC DNA]</scope>
    <source>
        <strain>AX4</strain>
    </source>
</reference>
<evidence type="ECO:0000250" key="1"/>
<evidence type="ECO:0000250" key="2">
    <source>
        <dbReference type="UniProtKB" id="Q92759"/>
    </source>
</evidence>
<evidence type="ECO:0000256" key="3">
    <source>
        <dbReference type="SAM" id="MobiDB-lite"/>
    </source>
</evidence>
<evidence type="ECO:0000305" key="4"/>
<dbReference type="EMBL" id="AAFI02000200">
    <property type="protein sequence ID" value="EAL60813.1"/>
    <property type="molecule type" value="Genomic_DNA"/>
</dbReference>
<dbReference type="RefSeq" id="XP_629237.1">
    <property type="nucleotide sequence ID" value="XM_629235.1"/>
</dbReference>
<dbReference type="SMR" id="Q54C29"/>
<dbReference type="FunCoup" id="Q54C29">
    <property type="interactions" value="413"/>
</dbReference>
<dbReference type="STRING" id="44689.Q54C29"/>
<dbReference type="PaxDb" id="44689-DDB0231037"/>
<dbReference type="EnsemblProtists" id="EAL60813">
    <property type="protein sequence ID" value="EAL60813"/>
    <property type="gene ID" value="DDB_G0293228"/>
</dbReference>
<dbReference type="GeneID" id="8629119"/>
<dbReference type="KEGG" id="ddi:DDB_G0293228"/>
<dbReference type="dictyBase" id="DDB_G0293228">
    <property type="gene designation" value="gtf2h4"/>
</dbReference>
<dbReference type="VEuPathDB" id="AmoebaDB:DDB_G0293228"/>
<dbReference type="eggNOG" id="KOG3471">
    <property type="taxonomic scope" value="Eukaryota"/>
</dbReference>
<dbReference type="HOGENOM" id="CLU_027280_4_0_1"/>
<dbReference type="InParanoid" id="Q54C29"/>
<dbReference type="OMA" id="KGFIIIE"/>
<dbReference type="PhylomeDB" id="Q54C29"/>
<dbReference type="Reactome" id="R-DDI-113418">
    <property type="pathway name" value="Formation of the Early Elongation Complex"/>
</dbReference>
<dbReference type="Reactome" id="R-DDI-5696395">
    <property type="pathway name" value="Formation of Incision Complex in GG-NER"/>
</dbReference>
<dbReference type="Reactome" id="R-DDI-674695">
    <property type="pathway name" value="RNA Polymerase II Pre-transcription Events"/>
</dbReference>
<dbReference type="Reactome" id="R-DDI-6781823">
    <property type="pathway name" value="Formation of TC-NER Pre-Incision Complex"/>
</dbReference>
<dbReference type="Reactome" id="R-DDI-6782135">
    <property type="pathway name" value="Dual incision in TC-NER"/>
</dbReference>
<dbReference type="Reactome" id="R-DDI-6782210">
    <property type="pathway name" value="Gap-filling DNA repair synthesis and ligation in TC-NER"/>
</dbReference>
<dbReference type="Reactome" id="R-DDI-6796648">
    <property type="pathway name" value="TP53 Regulates Transcription of DNA Repair Genes"/>
</dbReference>
<dbReference type="Reactome" id="R-DDI-72086">
    <property type="pathway name" value="mRNA Capping"/>
</dbReference>
<dbReference type="Reactome" id="R-DDI-73772">
    <property type="pathway name" value="RNA Polymerase I Promoter Escape"/>
</dbReference>
<dbReference type="Reactome" id="R-DDI-73776">
    <property type="pathway name" value="RNA Polymerase II Promoter Escape"/>
</dbReference>
<dbReference type="Reactome" id="R-DDI-73779">
    <property type="pathway name" value="RNA Polymerase II Transcription Pre-Initiation And Promoter Opening"/>
</dbReference>
<dbReference type="Reactome" id="R-DDI-75953">
    <property type="pathway name" value="RNA Polymerase II Transcription Initiation"/>
</dbReference>
<dbReference type="Reactome" id="R-DDI-76042">
    <property type="pathway name" value="RNA Polymerase II Transcription Initiation And Promoter Clearance"/>
</dbReference>
<dbReference type="Reactome" id="R-DDI-77075">
    <property type="pathway name" value="RNA Pol II CTD phosphorylation and interaction with CE"/>
</dbReference>
<dbReference type="PRO" id="PR:Q54C29"/>
<dbReference type="Proteomes" id="UP000002195">
    <property type="component" value="Chromosome 6"/>
</dbReference>
<dbReference type="GO" id="GO:0000439">
    <property type="term" value="C:transcription factor TFIIH core complex"/>
    <property type="evidence" value="ECO:0000318"/>
    <property type="project" value="GO_Central"/>
</dbReference>
<dbReference type="GO" id="GO:0005675">
    <property type="term" value="C:transcription factor TFIIH holo complex"/>
    <property type="evidence" value="ECO:0000250"/>
    <property type="project" value="dictyBase"/>
</dbReference>
<dbReference type="GO" id="GO:0001671">
    <property type="term" value="F:ATPase activator activity"/>
    <property type="evidence" value="ECO:0007669"/>
    <property type="project" value="InterPro"/>
</dbReference>
<dbReference type="GO" id="GO:0003690">
    <property type="term" value="F:double-stranded DNA binding"/>
    <property type="evidence" value="ECO:0000318"/>
    <property type="project" value="GO_Central"/>
</dbReference>
<dbReference type="GO" id="GO:0006289">
    <property type="term" value="P:nucleotide-excision repair"/>
    <property type="evidence" value="ECO:0000250"/>
    <property type="project" value="dictyBase"/>
</dbReference>
<dbReference type="GO" id="GO:0006366">
    <property type="term" value="P:transcription by RNA polymerase II"/>
    <property type="evidence" value="ECO:0000250"/>
    <property type="project" value="dictyBase"/>
</dbReference>
<dbReference type="FunFam" id="3.30.70.2610:FF:000003">
    <property type="entry name" value="RNA polymerase II transcription factor B subunit 2"/>
    <property type="match status" value="1"/>
</dbReference>
<dbReference type="Gene3D" id="3.30.70.2610">
    <property type="match status" value="1"/>
</dbReference>
<dbReference type="InterPro" id="IPR040662">
    <property type="entry name" value="Tfb2_C"/>
</dbReference>
<dbReference type="InterPro" id="IPR004598">
    <property type="entry name" value="TFIIH_p52/Tfb2"/>
</dbReference>
<dbReference type="PANTHER" id="PTHR13152:SF0">
    <property type="entry name" value="GENERAL TRANSCRIPTION FACTOR IIH SUBUNIT 4"/>
    <property type="match status" value="1"/>
</dbReference>
<dbReference type="PANTHER" id="PTHR13152">
    <property type="entry name" value="TFIIH, POLYPEPTIDE 4"/>
    <property type="match status" value="1"/>
</dbReference>
<dbReference type="Pfam" id="PF03849">
    <property type="entry name" value="Tfb2"/>
    <property type="match status" value="1"/>
</dbReference>
<dbReference type="Pfam" id="PF18307">
    <property type="entry name" value="Tfb2_C"/>
    <property type="match status" value="1"/>
</dbReference>
<sequence>MTLSKVFQYLASLDSKDLEELYKDPWTCQAILRSLPPRSKQYILKMLLVDTYPLSLAKDWSTQASIQQHKESLKKLFDLKIIFLDKINKPIQPQQQQSSQQSSSQQQQQQQQQQQQTEQTIRLNPLFQDNIKRSLVQVNQVIFSNNSSIKDNHKPPSIDDLDSYSKSQWEKVLYFLSDDTVQPSKLISELLLSSNLTKQEGDGLSITSEGFKFLLKDVYTQIWTLLIVYLDDLEKKKGKGSGSRNDLLSFLFRLSFLNLGRGYLVSELSEQQKEYLFALKQFGLIYMRTDSSILFYPTRLIISLTTGKTLSLIQSISSERTQTQKEQGYIVLETNYRLYAYTSSSLQISLLSLFVKMLYRLPNLAVGIITRESIRTALIHGITADQIIDFVRHNSHPNAANSGQPIPDVVAEQILLWEAERNRITYTKSVLYNSFPTNDCYIATLKFAKEQDYYIWSHDPLKTLVVKEEGNDPIRNFIKKNFA</sequence>
<protein>
    <recommendedName>
        <fullName>General transcription factor IIH subunit 4</fullName>
    </recommendedName>
    <alternativeName>
        <fullName>TFIIH basal transcription factor complex subunit 4</fullName>
    </alternativeName>
</protein>
<organism>
    <name type="scientific">Dictyostelium discoideum</name>
    <name type="common">Social amoeba</name>
    <dbReference type="NCBI Taxonomy" id="44689"/>
    <lineage>
        <taxon>Eukaryota</taxon>
        <taxon>Amoebozoa</taxon>
        <taxon>Evosea</taxon>
        <taxon>Eumycetozoa</taxon>
        <taxon>Dictyostelia</taxon>
        <taxon>Dictyosteliales</taxon>
        <taxon>Dictyosteliaceae</taxon>
        <taxon>Dictyostelium</taxon>
    </lineage>
</organism>
<comment type="function">
    <text evidence="2">Component of the general transcription and DNA repair factor IIH (TFIIH) core complex, which is involved in general and transcription-coupled nucleotide excision repair (NER) of damaged DNA and, when complexed to CAK, in RNA transcription by RNA polymerase II. In NER, TFIIH acts by opening DNA around the lesion to allow the excision of the damaged oligonucleotide and its replacement by a new DNA fragment. In transcription, TFIIH has an essential role in transcription initiation. When the pre-initiation complex (PIC) has been established, TFIIH is required for promoter opening and promoter escape. Phosphorylation of the C-terminal tail (CTD) of the largest subunit of RNA polymerase II by the kinase module CAK controls the initiation of transcription.</text>
</comment>
<comment type="subunit">
    <text evidence="2">Component of the 7-subunit TFIIH core complex composed of XPB/repB, XPD/repD, gtf2h1, gtf2h2, gtf2h3, gtf2h4 and gtf2h5, which is active in NER. The core complex associates with the 3-subunit CDK-activating kinase (CAK) module composed of cycH/cyclin H, cdk7 and mnat1 to form the 10-subunit holoenzyme (holo-TFIIH) active in transcription.</text>
</comment>
<comment type="subcellular location">
    <subcellularLocation>
        <location evidence="1">Nucleus</location>
    </subcellularLocation>
</comment>
<comment type="similarity">
    <text evidence="4">Belongs to the TFB2 family.</text>
</comment>
<accession>Q54C29</accession>
<proteinExistence type="inferred from homology"/>
<gene>
    <name type="primary">gtf2h4</name>
    <name type="synonym">tfiih4</name>
    <name type="ORF">DDB_G0293228</name>
</gene>